<protein>
    <recommendedName>
        <fullName evidence="1">Probable nicotinate-nucleotide adenylyltransferase</fullName>
        <ecNumber evidence="1">2.7.7.18</ecNumber>
    </recommendedName>
    <alternativeName>
        <fullName evidence="1">Deamido-NAD(+) diphosphorylase</fullName>
    </alternativeName>
    <alternativeName>
        <fullName evidence="1">Deamido-NAD(+) pyrophosphorylase</fullName>
    </alternativeName>
    <alternativeName>
        <fullName evidence="1">Nicotinate mononucleotide adenylyltransferase</fullName>
        <shortName evidence="1">NaMN adenylyltransferase</shortName>
    </alternativeName>
</protein>
<gene>
    <name evidence="1" type="primary">nadD</name>
    <name type="ordered locus">NMC2003</name>
</gene>
<sequence>MKKIGLFGGTFDPIHNGHLHIARAFADEIGLDAVVFLPAGGPYHKDAASASAADRLAMVELATAEDARFAVSDCDIVREGATYTFDTVQIFRQQFPSAQLWWLMGSDSLMKLHTWKKWQMLVRETNIAVAMRQGDSLHQTPRELHAWLGKSLQDGSVRILSAPMHNVSSTEIRRNLASQGVSDGIPPAAARYIREHGLYEK</sequence>
<feature type="chain" id="PRO_0000310127" description="Probable nicotinate-nucleotide adenylyltransferase">
    <location>
        <begin position="1"/>
        <end position="201"/>
    </location>
</feature>
<accession>A1KWA2</accession>
<organism>
    <name type="scientific">Neisseria meningitidis serogroup C / serotype 2a (strain ATCC 700532 / DSM 15464 / FAM18)</name>
    <dbReference type="NCBI Taxonomy" id="272831"/>
    <lineage>
        <taxon>Bacteria</taxon>
        <taxon>Pseudomonadati</taxon>
        <taxon>Pseudomonadota</taxon>
        <taxon>Betaproteobacteria</taxon>
        <taxon>Neisseriales</taxon>
        <taxon>Neisseriaceae</taxon>
        <taxon>Neisseria</taxon>
    </lineage>
</organism>
<name>NADD_NEIMF</name>
<proteinExistence type="inferred from homology"/>
<evidence type="ECO:0000255" key="1">
    <source>
        <dbReference type="HAMAP-Rule" id="MF_00244"/>
    </source>
</evidence>
<keyword id="KW-0067">ATP-binding</keyword>
<keyword id="KW-0520">NAD</keyword>
<keyword id="KW-0547">Nucleotide-binding</keyword>
<keyword id="KW-0548">Nucleotidyltransferase</keyword>
<keyword id="KW-0662">Pyridine nucleotide biosynthesis</keyword>
<keyword id="KW-0808">Transferase</keyword>
<reference key="1">
    <citation type="journal article" date="2007" name="PLoS Genet.">
        <title>Meningococcal genetic variation mechanisms viewed through comparative analysis of serogroup C strain FAM18.</title>
        <authorList>
            <person name="Bentley S.D."/>
            <person name="Vernikos G.S."/>
            <person name="Snyder L.A.S."/>
            <person name="Churcher C."/>
            <person name="Arrowsmith C."/>
            <person name="Chillingworth T."/>
            <person name="Cronin A."/>
            <person name="Davis P.H."/>
            <person name="Holroyd N.E."/>
            <person name="Jagels K."/>
            <person name="Maddison M."/>
            <person name="Moule S."/>
            <person name="Rabbinowitsch E."/>
            <person name="Sharp S."/>
            <person name="Unwin L."/>
            <person name="Whitehead S."/>
            <person name="Quail M.A."/>
            <person name="Achtman M."/>
            <person name="Barrell B.G."/>
            <person name="Saunders N.J."/>
            <person name="Parkhill J."/>
        </authorList>
    </citation>
    <scope>NUCLEOTIDE SEQUENCE [LARGE SCALE GENOMIC DNA]</scope>
    <source>
        <strain>ATCC 700532 / DSM 15464 / FAM18</strain>
    </source>
</reference>
<comment type="function">
    <text evidence="1">Catalyzes the reversible adenylation of nicotinate mononucleotide (NaMN) to nicotinic acid adenine dinucleotide (NaAD).</text>
</comment>
<comment type="catalytic activity">
    <reaction evidence="1">
        <text>nicotinate beta-D-ribonucleotide + ATP + H(+) = deamido-NAD(+) + diphosphate</text>
        <dbReference type="Rhea" id="RHEA:22860"/>
        <dbReference type="ChEBI" id="CHEBI:15378"/>
        <dbReference type="ChEBI" id="CHEBI:30616"/>
        <dbReference type="ChEBI" id="CHEBI:33019"/>
        <dbReference type="ChEBI" id="CHEBI:57502"/>
        <dbReference type="ChEBI" id="CHEBI:58437"/>
        <dbReference type="EC" id="2.7.7.18"/>
    </reaction>
</comment>
<comment type="pathway">
    <text evidence="1">Cofactor biosynthesis; NAD(+) biosynthesis; deamido-NAD(+) from nicotinate D-ribonucleotide: step 1/1.</text>
</comment>
<comment type="similarity">
    <text evidence="1">Belongs to the NadD family.</text>
</comment>
<dbReference type="EC" id="2.7.7.18" evidence="1"/>
<dbReference type="EMBL" id="AM421808">
    <property type="protein sequence ID" value="CAM11159.1"/>
    <property type="molecule type" value="Genomic_DNA"/>
</dbReference>
<dbReference type="RefSeq" id="WP_002236559.1">
    <property type="nucleotide sequence ID" value="NC_008767.1"/>
</dbReference>
<dbReference type="SMR" id="A1KWA2"/>
<dbReference type="KEGG" id="nmc:NMC2003"/>
<dbReference type="HOGENOM" id="CLU_069765_0_0_4"/>
<dbReference type="UniPathway" id="UPA00253">
    <property type="reaction ID" value="UER00332"/>
</dbReference>
<dbReference type="Proteomes" id="UP000002286">
    <property type="component" value="Chromosome"/>
</dbReference>
<dbReference type="GO" id="GO:0005524">
    <property type="term" value="F:ATP binding"/>
    <property type="evidence" value="ECO:0007669"/>
    <property type="project" value="UniProtKB-KW"/>
</dbReference>
<dbReference type="GO" id="GO:0004515">
    <property type="term" value="F:nicotinate-nucleotide adenylyltransferase activity"/>
    <property type="evidence" value="ECO:0007669"/>
    <property type="project" value="UniProtKB-UniRule"/>
</dbReference>
<dbReference type="GO" id="GO:0009435">
    <property type="term" value="P:NAD biosynthetic process"/>
    <property type="evidence" value="ECO:0007669"/>
    <property type="project" value="UniProtKB-UniRule"/>
</dbReference>
<dbReference type="CDD" id="cd02165">
    <property type="entry name" value="NMNAT"/>
    <property type="match status" value="1"/>
</dbReference>
<dbReference type="FunFam" id="3.40.50.620:FF:000254">
    <property type="entry name" value="Probable nicotinate-nucleotide adenylyltransferase"/>
    <property type="match status" value="1"/>
</dbReference>
<dbReference type="Gene3D" id="3.40.50.620">
    <property type="entry name" value="HUPs"/>
    <property type="match status" value="1"/>
</dbReference>
<dbReference type="HAMAP" id="MF_00244">
    <property type="entry name" value="NaMN_adenylyltr"/>
    <property type="match status" value="1"/>
</dbReference>
<dbReference type="InterPro" id="IPR004821">
    <property type="entry name" value="Cyt_trans-like"/>
</dbReference>
<dbReference type="InterPro" id="IPR005248">
    <property type="entry name" value="NadD/NMNAT"/>
</dbReference>
<dbReference type="InterPro" id="IPR014729">
    <property type="entry name" value="Rossmann-like_a/b/a_fold"/>
</dbReference>
<dbReference type="NCBIfam" id="TIGR00125">
    <property type="entry name" value="cyt_tran_rel"/>
    <property type="match status" value="1"/>
</dbReference>
<dbReference type="NCBIfam" id="TIGR00482">
    <property type="entry name" value="nicotinate (nicotinamide) nucleotide adenylyltransferase"/>
    <property type="match status" value="1"/>
</dbReference>
<dbReference type="NCBIfam" id="NF000840">
    <property type="entry name" value="PRK00071.1-3"/>
    <property type="match status" value="1"/>
</dbReference>
<dbReference type="PANTHER" id="PTHR39321">
    <property type="entry name" value="NICOTINATE-NUCLEOTIDE ADENYLYLTRANSFERASE-RELATED"/>
    <property type="match status" value="1"/>
</dbReference>
<dbReference type="PANTHER" id="PTHR39321:SF3">
    <property type="entry name" value="PHOSPHOPANTETHEINE ADENYLYLTRANSFERASE"/>
    <property type="match status" value="1"/>
</dbReference>
<dbReference type="Pfam" id="PF01467">
    <property type="entry name" value="CTP_transf_like"/>
    <property type="match status" value="1"/>
</dbReference>
<dbReference type="SUPFAM" id="SSF52374">
    <property type="entry name" value="Nucleotidylyl transferase"/>
    <property type="match status" value="1"/>
</dbReference>